<protein>
    <recommendedName>
        <fullName evidence="1">Large ribosomal subunit protein bL12</fullName>
    </recommendedName>
    <alternativeName>
        <fullName evidence="2">50S ribosomal protein L7/L12</fullName>
    </alternativeName>
</protein>
<accession>B7MRB2</accession>
<reference key="1">
    <citation type="journal article" date="2009" name="PLoS Genet.">
        <title>Organised genome dynamics in the Escherichia coli species results in highly diverse adaptive paths.</title>
        <authorList>
            <person name="Touchon M."/>
            <person name="Hoede C."/>
            <person name="Tenaillon O."/>
            <person name="Barbe V."/>
            <person name="Baeriswyl S."/>
            <person name="Bidet P."/>
            <person name="Bingen E."/>
            <person name="Bonacorsi S."/>
            <person name="Bouchier C."/>
            <person name="Bouvet O."/>
            <person name="Calteau A."/>
            <person name="Chiapello H."/>
            <person name="Clermont O."/>
            <person name="Cruveiller S."/>
            <person name="Danchin A."/>
            <person name="Diard M."/>
            <person name="Dossat C."/>
            <person name="Karoui M.E."/>
            <person name="Frapy E."/>
            <person name="Garry L."/>
            <person name="Ghigo J.M."/>
            <person name="Gilles A.M."/>
            <person name="Johnson J."/>
            <person name="Le Bouguenec C."/>
            <person name="Lescat M."/>
            <person name="Mangenot S."/>
            <person name="Martinez-Jehanne V."/>
            <person name="Matic I."/>
            <person name="Nassif X."/>
            <person name="Oztas S."/>
            <person name="Petit M.A."/>
            <person name="Pichon C."/>
            <person name="Rouy Z."/>
            <person name="Ruf C.S."/>
            <person name="Schneider D."/>
            <person name="Tourret J."/>
            <person name="Vacherie B."/>
            <person name="Vallenet D."/>
            <person name="Medigue C."/>
            <person name="Rocha E.P.C."/>
            <person name="Denamur E."/>
        </authorList>
    </citation>
    <scope>NUCLEOTIDE SEQUENCE [LARGE SCALE GENOMIC DNA]</scope>
    <source>
        <strain>ED1a</strain>
    </source>
</reference>
<comment type="function">
    <text evidence="1">Forms part of the ribosomal stalk which helps the ribosome interact with GTP-bound translation factors. Is thus essential for accurate translation.</text>
</comment>
<comment type="subunit">
    <text evidence="1">Homodimer. Part of the ribosomal stalk of the 50S ribosomal subunit. Forms a multimeric L10(L12)X complex, where L10 forms an elongated spine to which 2 to 4 L12 dimers bind in a sequential fashion. Binds GTP-bound translation factors.</text>
</comment>
<comment type="similarity">
    <text evidence="1">Belongs to the bacterial ribosomal protein bL12 family.</text>
</comment>
<dbReference type="EMBL" id="CU928162">
    <property type="protein sequence ID" value="CAR10800.2"/>
    <property type="molecule type" value="Genomic_DNA"/>
</dbReference>
<dbReference type="RefSeq" id="WP_000028880.1">
    <property type="nucleotide sequence ID" value="NC_011745.1"/>
</dbReference>
<dbReference type="SMR" id="B7MRB2"/>
<dbReference type="KEGG" id="ecq:ECED1_4693"/>
<dbReference type="HOGENOM" id="CLU_086499_3_2_6"/>
<dbReference type="Proteomes" id="UP000000748">
    <property type="component" value="Chromosome"/>
</dbReference>
<dbReference type="GO" id="GO:0022625">
    <property type="term" value="C:cytosolic large ribosomal subunit"/>
    <property type="evidence" value="ECO:0007669"/>
    <property type="project" value="TreeGrafter"/>
</dbReference>
<dbReference type="GO" id="GO:0003729">
    <property type="term" value="F:mRNA binding"/>
    <property type="evidence" value="ECO:0007669"/>
    <property type="project" value="TreeGrafter"/>
</dbReference>
<dbReference type="GO" id="GO:0003735">
    <property type="term" value="F:structural constituent of ribosome"/>
    <property type="evidence" value="ECO:0007669"/>
    <property type="project" value="InterPro"/>
</dbReference>
<dbReference type="GO" id="GO:0006412">
    <property type="term" value="P:translation"/>
    <property type="evidence" value="ECO:0007669"/>
    <property type="project" value="UniProtKB-UniRule"/>
</dbReference>
<dbReference type="CDD" id="cd00387">
    <property type="entry name" value="Ribosomal_L7_L12"/>
    <property type="match status" value="1"/>
</dbReference>
<dbReference type="FunFam" id="1.20.5.710:FF:000001">
    <property type="entry name" value="50S ribosomal protein L7/L12"/>
    <property type="match status" value="1"/>
</dbReference>
<dbReference type="FunFam" id="3.30.1390.10:FF:000001">
    <property type="entry name" value="50S ribosomal protein L7/L12"/>
    <property type="match status" value="1"/>
</dbReference>
<dbReference type="Gene3D" id="3.30.1390.10">
    <property type="match status" value="1"/>
</dbReference>
<dbReference type="Gene3D" id="1.20.5.710">
    <property type="entry name" value="Single helix bin"/>
    <property type="match status" value="1"/>
</dbReference>
<dbReference type="HAMAP" id="MF_00368">
    <property type="entry name" value="Ribosomal_bL12"/>
    <property type="match status" value="1"/>
</dbReference>
<dbReference type="InterPro" id="IPR000206">
    <property type="entry name" value="Ribosomal_bL12"/>
</dbReference>
<dbReference type="InterPro" id="IPR013823">
    <property type="entry name" value="Ribosomal_bL12_C"/>
</dbReference>
<dbReference type="InterPro" id="IPR014719">
    <property type="entry name" value="Ribosomal_bL12_C/ClpS-like"/>
</dbReference>
<dbReference type="InterPro" id="IPR008932">
    <property type="entry name" value="Ribosomal_bL12_oligo"/>
</dbReference>
<dbReference type="InterPro" id="IPR036235">
    <property type="entry name" value="Ribosomal_bL12_oligo_N_sf"/>
</dbReference>
<dbReference type="NCBIfam" id="TIGR00855">
    <property type="entry name" value="L12"/>
    <property type="match status" value="1"/>
</dbReference>
<dbReference type="PANTHER" id="PTHR45987">
    <property type="entry name" value="39S RIBOSOMAL PROTEIN L12"/>
    <property type="match status" value="1"/>
</dbReference>
<dbReference type="PANTHER" id="PTHR45987:SF4">
    <property type="entry name" value="LARGE RIBOSOMAL SUBUNIT PROTEIN BL12M"/>
    <property type="match status" value="1"/>
</dbReference>
<dbReference type="Pfam" id="PF00542">
    <property type="entry name" value="Ribosomal_L12"/>
    <property type="match status" value="1"/>
</dbReference>
<dbReference type="Pfam" id="PF16320">
    <property type="entry name" value="Ribosomal_L12_N"/>
    <property type="match status" value="1"/>
</dbReference>
<dbReference type="SUPFAM" id="SSF54736">
    <property type="entry name" value="ClpS-like"/>
    <property type="match status" value="1"/>
</dbReference>
<dbReference type="SUPFAM" id="SSF48300">
    <property type="entry name" value="Ribosomal protein L7/12, oligomerisation (N-terminal) domain"/>
    <property type="match status" value="1"/>
</dbReference>
<organism>
    <name type="scientific">Escherichia coli O81 (strain ED1a)</name>
    <dbReference type="NCBI Taxonomy" id="585397"/>
    <lineage>
        <taxon>Bacteria</taxon>
        <taxon>Pseudomonadati</taxon>
        <taxon>Pseudomonadota</taxon>
        <taxon>Gammaproteobacteria</taxon>
        <taxon>Enterobacterales</taxon>
        <taxon>Enterobacteriaceae</taxon>
        <taxon>Escherichia</taxon>
    </lineage>
</organism>
<name>RL7_ECO81</name>
<keyword id="KW-0687">Ribonucleoprotein</keyword>
<keyword id="KW-0689">Ribosomal protein</keyword>
<evidence type="ECO:0000255" key="1">
    <source>
        <dbReference type="HAMAP-Rule" id="MF_00368"/>
    </source>
</evidence>
<evidence type="ECO:0000305" key="2"/>
<proteinExistence type="inferred from homology"/>
<gene>
    <name evidence="1" type="primary">rplL</name>
    <name type="ordered locus">ECED1_4693</name>
</gene>
<feature type="chain" id="PRO_1000195796" description="Large ribosomal subunit protein bL12">
    <location>
        <begin position="1"/>
        <end position="121"/>
    </location>
</feature>
<sequence length="121" mass="12325">MSITKDQIIEAVAAMSVMDVVELISAMEEKFGVSAAAAVAVAAGPVETAEEKTEFDVILKAAGANKVAVIKAVRGATGLGLKEAKDLVESAPAALKEGVSKDDAEALKKALEEAGAEVEVK</sequence>